<protein>
    <recommendedName>
        <fullName evidence="1">Large ribosomal subunit protein uL6</fullName>
    </recommendedName>
    <alternativeName>
        <fullName evidence="2">50S ribosomal protein L6</fullName>
    </alternativeName>
</protein>
<keyword id="KW-1185">Reference proteome</keyword>
<keyword id="KW-0687">Ribonucleoprotein</keyword>
<keyword id="KW-0689">Ribosomal protein</keyword>
<keyword id="KW-0694">RNA-binding</keyword>
<keyword id="KW-0699">rRNA-binding</keyword>
<organism>
    <name type="scientific">Dinoroseobacter shibae (strain DSM 16493 / NCIMB 14021 / DFL 12)</name>
    <dbReference type="NCBI Taxonomy" id="398580"/>
    <lineage>
        <taxon>Bacteria</taxon>
        <taxon>Pseudomonadati</taxon>
        <taxon>Pseudomonadota</taxon>
        <taxon>Alphaproteobacteria</taxon>
        <taxon>Rhodobacterales</taxon>
        <taxon>Roseobacteraceae</taxon>
        <taxon>Dinoroseobacter</taxon>
    </lineage>
</organism>
<dbReference type="EMBL" id="CP000830">
    <property type="protein sequence ID" value="ABV92049.1"/>
    <property type="molecule type" value="Genomic_DNA"/>
</dbReference>
<dbReference type="RefSeq" id="WP_012176979.1">
    <property type="nucleotide sequence ID" value="NC_009952.1"/>
</dbReference>
<dbReference type="SMR" id="A8LM72"/>
<dbReference type="STRING" id="398580.Dshi_0300"/>
<dbReference type="KEGG" id="dsh:Dshi_0300"/>
<dbReference type="eggNOG" id="COG0097">
    <property type="taxonomic scope" value="Bacteria"/>
</dbReference>
<dbReference type="HOGENOM" id="CLU_065464_1_2_5"/>
<dbReference type="OrthoDB" id="9805007at2"/>
<dbReference type="Proteomes" id="UP000006833">
    <property type="component" value="Chromosome"/>
</dbReference>
<dbReference type="GO" id="GO:0022625">
    <property type="term" value="C:cytosolic large ribosomal subunit"/>
    <property type="evidence" value="ECO:0007669"/>
    <property type="project" value="TreeGrafter"/>
</dbReference>
<dbReference type="GO" id="GO:0019843">
    <property type="term" value="F:rRNA binding"/>
    <property type="evidence" value="ECO:0007669"/>
    <property type="project" value="UniProtKB-UniRule"/>
</dbReference>
<dbReference type="GO" id="GO:0003735">
    <property type="term" value="F:structural constituent of ribosome"/>
    <property type="evidence" value="ECO:0007669"/>
    <property type="project" value="InterPro"/>
</dbReference>
<dbReference type="GO" id="GO:0002181">
    <property type="term" value="P:cytoplasmic translation"/>
    <property type="evidence" value="ECO:0007669"/>
    <property type="project" value="TreeGrafter"/>
</dbReference>
<dbReference type="FunFam" id="3.90.930.12:FF:000001">
    <property type="entry name" value="50S ribosomal protein L6"/>
    <property type="match status" value="1"/>
</dbReference>
<dbReference type="Gene3D" id="3.90.930.12">
    <property type="entry name" value="Ribosomal protein L6, alpha-beta domain"/>
    <property type="match status" value="2"/>
</dbReference>
<dbReference type="HAMAP" id="MF_01365_B">
    <property type="entry name" value="Ribosomal_uL6_B"/>
    <property type="match status" value="1"/>
</dbReference>
<dbReference type="InterPro" id="IPR000702">
    <property type="entry name" value="Ribosomal_uL6-like"/>
</dbReference>
<dbReference type="InterPro" id="IPR036789">
    <property type="entry name" value="Ribosomal_uL6-like_a/b-dom_sf"/>
</dbReference>
<dbReference type="InterPro" id="IPR020040">
    <property type="entry name" value="Ribosomal_uL6_a/b-dom"/>
</dbReference>
<dbReference type="InterPro" id="IPR019906">
    <property type="entry name" value="Ribosomal_uL6_bac-type"/>
</dbReference>
<dbReference type="InterPro" id="IPR002358">
    <property type="entry name" value="Ribosomal_uL6_CS"/>
</dbReference>
<dbReference type="NCBIfam" id="TIGR03654">
    <property type="entry name" value="L6_bact"/>
    <property type="match status" value="1"/>
</dbReference>
<dbReference type="PANTHER" id="PTHR11655">
    <property type="entry name" value="60S/50S RIBOSOMAL PROTEIN L6/L9"/>
    <property type="match status" value="1"/>
</dbReference>
<dbReference type="PANTHER" id="PTHR11655:SF14">
    <property type="entry name" value="LARGE RIBOSOMAL SUBUNIT PROTEIN UL6M"/>
    <property type="match status" value="1"/>
</dbReference>
<dbReference type="Pfam" id="PF00347">
    <property type="entry name" value="Ribosomal_L6"/>
    <property type="match status" value="2"/>
</dbReference>
<dbReference type="PIRSF" id="PIRSF002162">
    <property type="entry name" value="Ribosomal_L6"/>
    <property type="match status" value="1"/>
</dbReference>
<dbReference type="PRINTS" id="PR00059">
    <property type="entry name" value="RIBOSOMALL6"/>
</dbReference>
<dbReference type="SUPFAM" id="SSF56053">
    <property type="entry name" value="Ribosomal protein L6"/>
    <property type="match status" value="2"/>
</dbReference>
<dbReference type="PROSITE" id="PS00525">
    <property type="entry name" value="RIBOSOMAL_L6_1"/>
    <property type="match status" value="1"/>
</dbReference>
<accession>A8LM72</accession>
<comment type="function">
    <text evidence="1">This protein binds to the 23S rRNA, and is important in its secondary structure. It is located near the subunit interface in the base of the L7/L12 stalk, and near the tRNA binding site of the peptidyltransferase center.</text>
</comment>
<comment type="subunit">
    <text evidence="1">Part of the 50S ribosomal subunit.</text>
</comment>
<comment type="similarity">
    <text evidence="1">Belongs to the universal ribosomal protein uL6 family.</text>
</comment>
<sequence length="177" mass="19504">MSRIGKKPVELPTGVTASVSGQTIEVKGPKATRSFTATDDVTLKVEDNVITIEPRGKSKRARQQWGMSRTMVGNLVTGVTNGFKKELEIQGVGYRAQMQGNTLKLNLGLSHEVNYEVPAGVTVTCPKVTEIVIEGTDEQLVGQVAANIRDWRKPEPYKGKGIRYKGEFIFRKEGKKK</sequence>
<name>RL6_DINSH</name>
<evidence type="ECO:0000255" key="1">
    <source>
        <dbReference type="HAMAP-Rule" id="MF_01365"/>
    </source>
</evidence>
<evidence type="ECO:0000305" key="2"/>
<reference key="1">
    <citation type="journal article" date="2010" name="ISME J.">
        <title>The complete genome sequence of the algal symbiont Dinoroseobacter shibae: a hitchhiker's guide to life in the sea.</title>
        <authorList>
            <person name="Wagner-Dobler I."/>
            <person name="Ballhausen B."/>
            <person name="Berger M."/>
            <person name="Brinkhoff T."/>
            <person name="Buchholz I."/>
            <person name="Bunk B."/>
            <person name="Cypionka H."/>
            <person name="Daniel R."/>
            <person name="Drepper T."/>
            <person name="Gerdts G."/>
            <person name="Hahnke S."/>
            <person name="Han C."/>
            <person name="Jahn D."/>
            <person name="Kalhoefer D."/>
            <person name="Kiss H."/>
            <person name="Klenk H.P."/>
            <person name="Kyrpides N."/>
            <person name="Liebl W."/>
            <person name="Liesegang H."/>
            <person name="Meincke L."/>
            <person name="Pati A."/>
            <person name="Petersen J."/>
            <person name="Piekarski T."/>
            <person name="Pommerenke C."/>
            <person name="Pradella S."/>
            <person name="Pukall R."/>
            <person name="Rabus R."/>
            <person name="Stackebrandt E."/>
            <person name="Thole S."/>
            <person name="Thompson L."/>
            <person name="Tielen P."/>
            <person name="Tomasch J."/>
            <person name="von Jan M."/>
            <person name="Wanphrut N."/>
            <person name="Wichels A."/>
            <person name="Zech H."/>
            <person name="Simon M."/>
        </authorList>
    </citation>
    <scope>NUCLEOTIDE SEQUENCE [LARGE SCALE GENOMIC DNA]</scope>
    <source>
        <strain>DSM 16493 / NCIMB 14021 / DFL 12</strain>
    </source>
</reference>
<feature type="chain" id="PRO_1000087041" description="Large ribosomal subunit protein uL6">
    <location>
        <begin position="1"/>
        <end position="177"/>
    </location>
</feature>
<proteinExistence type="inferred from homology"/>
<gene>
    <name evidence="1" type="primary">rplF</name>
    <name type="ordered locus">Dshi_0300</name>
</gene>